<protein>
    <recommendedName>
        <fullName evidence="3">Peptide PGLa-BM1</fullName>
    </recommendedName>
</protein>
<reference evidence="4" key="1">
    <citation type="journal article" date="2015" name="Peptides">
        <title>Host-defense and trefoil factor family peptides in skin secretions of the Mawa clawed frog Xenopus boumbaensis (Pipidae).</title>
        <authorList>
            <person name="Conlon J.M."/>
            <person name="Mechkarska M."/>
            <person name="Kolodziejek J."/>
            <person name="Leprince J."/>
            <person name="Coquet L."/>
            <person name="Jouenne T."/>
            <person name="Vaudry H."/>
            <person name="Nowotny N."/>
            <person name="King J.D."/>
        </authorList>
    </citation>
    <scope>PROTEIN SEQUENCE</scope>
    <scope>SUBCELLULAR LOCATION</scope>
    <scope>MASS SPECTROMETRY</scope>
    <scope>AMIDATION AT LEU-22</scope>
    <source>
        <tissue evidence="3">Skin secretion</tissue>
    </source>
</reference>
<accession>C0HKL7</accession>
<keyword id="KW-0027">Amidation</keyword>
<keyword id="KW-0878">Amphibian defense peptide</keyword>
<keyword id="KW-0929">Antimicrobial</keyword>
<keyword id="KW-0903">Direct protein sequencing</keyword>
<keyword id="KW-0964">Secreted</keyword>
<proteinExistence type="evidence at protein level"/>
<sequence>GMASKAGSVLGKVAKVALKAAL</sequence>
<comment type="function">
    <text evidence="1">Antimicrobial peptide.</text>
</comment>
<comment type="subcellular location">
    <subcellularLocation>
        <location evidence="2">Secreted</location>
    </subcellularLocation>
</comment>
<comment type="tissue specificity">
    <text evidence="5">Expressed by the skin glands.</text>
</comment>
<comment type="mass spectrometry"/>
<comment type="similarity">
    <text evidence="4">Belongs to the gastrin/cholecystokinin family. Magainin subfamily.</text>
</comment>
<organism evidence="3">
    <name type="scientific">Xenopus boumbaensis</name>
    <name type="common">Mawa clawed frog</name>
    <dbReference type="NCBI Taxonomy" id="288550"/>
    <lineage>
        <taxon>Eukaryota</taxon>
        <taxon>Metazoa</taxon>
        <taxon>Chordata</taxon>
        <taxon>Craniata</taxon>
        <taxon>Vertebrata</taxon>
        <taxon>Euteleostomi</taxon>
        <taxon>Amphibia</taxon>
        <taxon>Batrachia</taxon>
        <taxon>Anura</taxon>
        <taxon>Pipoidea</taxon>
        <taxon>Pipidae</taxon>
        <taxon>Xenopodinae</taxon>
        <taxon>Xenopus</taxon>
        <taxon>Xenopus</taxon>
    </lineage>
</organism>
<dbReference type="GO" id="GO:0005576">
    <property type="term" value="C:extracellular region"/>
    <property type="evidence" value="ECO:0007669"/>
    <property type="project" value="UniProtKB-SubCell"/>
</dbReference>
<dbReference type="GO" id="GO:0006952">
    <property type="term" value="P:defense response"/>
    <property type="evidence" value="ECO:0007669"/>
    <property type="project" value="UniProtKB-KW"/>
</dbReference>
<name>PGBM1_XENBM</name>
<feature type="peptide" id="PRO_0000440794" description="Peptide PGLa-BM1" evidence="2">
    <location>
        <begin position="1"/>
        <end position="22"/>
    </location>
</feature>
<feature type="modified residue" description="Leucine amide" evidence="2">
    <location>
        <position position="22"/>
    </location>
</feature>
<evidence type="ECO:0000250" key="1">
    <source>
        <dbReference type="UniProtKB" id="C0HK87"/>
    </source>
</evidence>
<evidence type="ECO:0000269" key="2">
    <source>
    </source>
</evidence>
<evidence type="ECO:0000303" key="3">
    <source>
    </source>
</evidence>
<evidence type="ECO:0000305" key="4"/>
<evidence type="ECO:0000305" key="5">
    <source>
    </source>
</evidence>